<organism>
    <name type="scientific">Thermus thermophilus (strain ATCC 27634 / DSM 579 / HB8)</name>
    <dbReference type="NCBI Taxonomy" id="300852"/>
    <lineage>
        <taxon>Bacteria</taxon>
        <taxon>Thermotogati</taxon>
        <taxon>Deinococcota</taxon>
        <taxon>Deinococci</taxon>
        <taxon>Thermales</taxon>
        <taxon>Thermaceae</taxon>
        <taxon>Thermus</taxon>
    </lineage>
</organism>
<protein>
    <recommendedName>
        <fullName evidence="1">RNA 2',3'-cyclic phosphodiesterase</fullName>
        <shortName evidence="1">RNA 2',3'-CPDase</shortName>
        <ecNumber evidence="1">3.1.4.58</ecNumber>
    </recommendedName>
</protein>
<evidence type="ECO:0000255" key="1">
    <source>
        <dbReference type="HAMAP-Rule" id="MF_01940"/>
    </source>
</evidence>
<evidence type="ECO:0000305" key="2">
    <source>
    </source>
</evidence>
<evidence type="ECO:0000312" key="3">
    <source>
        <dbReference type="EMBL" id="BAD71642.1"/>
    </source>
</evidence>
<evidence type="ECO:0007829" key="4">
    <source>
        <dbReference type="PDB" id="1IUH"/>
    </source>
</evidence>
<name>THPR_THET8</name>
<feature type="chain" id="PRO_0000431802" description="RNA 2',3'-cyclic phosphodiesterase">
    <location>
        <begin position="1"/>
        <end position="198"/>
    </location>
</feature>
<feature type="short sequence motif" description="HXTX 1" evidence="1 2">
    <location>
        <begin position="39"/>
        <end position="42"/>
    </location>
</feature>
<feature type="short sequence motif" description="HXTX 2" evidence="1 2">
    <location>
        <begin position="130"/>
        <end position="133"/>
    </location>
</feature>
<feature type="active site" description="Proton donor" evidence="1 2">
    <location>
        <position position="39"/>
    </location>
</feature>
<feature type="active site" description="Proton acceptor" evidence="1 2">
    <location>
        <position position="130"/>
    </location>
</feature>
<feature type="strand" evidence="4">
    <location>
        <begin position="2"/>
        <end position="8"/>
    </location>
</feature>
<feature type="helix" evidence="4">
    <location>
        <begin position="11"/>
        <end position="21"/>
    </location>
</feature>
<feature type="helix" evidence="4">
    <location>
        <begin position="22"/>
        <end position="24"/>
    </location>
</feature>
<feature type="strand" evidence="4">
    <location>
        <begin position="30"/>
        <end position="32"/>
    </location>
</feature>
<feature type="helix" evidence="4">
    <location>
        <begin position="35"/>
        <end position="37"/>
    </location>
</feature>
<feature type="strand" evidence="4">
    <location>
        <begin position="39"/>
        <end position="47"/>
    </location>
</feature>
<feature type="helix" evidence="4">
    <location>
        <begin position="50"/>
        <end position="52"/>
    </location>
</feature>
<feature type="helix" evidence="4">
    <location>
        <begin position="53"/>
        <end position="66"/>
    </location>
</feature>
<feature type="strand" evidence="4">
    <location>
        <begin position="70"/>
        <end position="85"/>
    </location>
</feature>
<feature type="strand" evidence="4">
    <location>
        <begin position="87"/>
        <end position="94"/>
    </location>
</feature>
<feature type="helix" evidence="4">
    <location>
        <begin position="96"/>
        <end position="113"/>
    </location>
</feature>
<feature type="helix" evidence="4">
    <location>
        <begin position="114"/>
        <end position="119"/>
    </location>
</feature>
<feature type="turn" evidence="4">
    <location>
        <begin position="121"/>
        <end position="124"/>
    </location>
</feature>
<feature type="strand" evidence="4">
    <location>
        <begin position="130"/>
        <end position="138"/>
    </location>
</feature>
<feature type="strand" evidence="4">
    <location>
        <begin position="150"/>
        <end position="154"/>
    </location>
</feature>
<feature type="strand" evidence="4">
    <location>
        <begin position="156"/>
        <end position="164"/>
    </location>
</feature>
<feature type="strand" evidence="4">
    <location>
        <begin position="166"/>
        <end position="178"/>
    </location>
</feature>
<proteinExistence type="evidence at protein level"/>
<comment type="function">
    <text evidence="1">Hydrolyzes RNA 2',3'-cyclic phosphodiester to an RNA 2'-phosphomonoester.</text>
</comment>
<comment type="catalytic activity">
    <reaction evidence="1">
        <text>a 3'-end 2',3'-cyclophospho-ribonucleotide-RNA + H2O = a 3'-end 2'-phospho-ribonucleotide-RNA + H(+)</text>
        <dbReference type="Rhea" id="RHEA:11828"/>
        <dbReference type="Rhea" id="RHEA-COMP:10464"/>
        <dbReference type="Rhea" id="RHEA-COMP:17353"/>
        <dbReference type="ChEBI" id="CHEBI:15377"/>
        <dbReference type="ChEBI" id="CHEBI:15378"/>
        <dbReference type="ChEBI" id="CHEBI:83064"/>
        <dbReference type="ChEBI" id="CHEBI:173113"/>
        <dbReference type="EC" id="3.1.4.58"/>
    </reaction>
</comment>
<comment type="similarity">
    <text evidence="1">Belongs to the 2H phosphoesterase superfamily. ThpR family.</text>
</comment>
<gene>
    <name evidence="3" type="ordered locus">TTHA1819</name>
</gene>
<dbReference type="EC" id="3.1.4.58" evidence="1"/>
<dbReference type="EMBL" id="AB107665">
    <property type="protein sequence ID" value="BAC67697.1"/>
    <property type="molecule type" value="Genomic_DNA"/>
</dbReference>
<dbReference type="EMBL" id="AP008226">
    <property type="protein sequence ID" value="BAD71642.1"/>
    <property type="molecule type" value="Genomic_DNA"/>
</dbReference>
<dbReference type="RefSeq" id="YP_145085.1">
    <property type="nucleotide sequence ID" value="NC_006461.1"/>
</dbReference>
<dbReference type="PDB" id="1IUH">
    <property type="method" value="X-ray"/>
    <property type="resolution" value="2.50 A"/>
    <property type="chains" value="A=1-198"/>
</dbReference>
<dbReference type="PDBsum" id="1IUH"/>
<dbReference type="SMR" id="Q5SHB1"/>
<dbReference type="EnsemblBacteria" id="BAD71642">
    <property type="protein sequence ID" value="BAD71642"/>
    <property type="gene ID" value="BAD71642"/>
</dbReference>
<dbReference type="GeneID" id="3168502"/>
<dbReference type="KEGG" id="ttj:TTHA1819"/>
<dbReference type="PATRIC" id="fig|300852.9.peg.1790"/>
<dbReference type="eggNOG" id="COG1514">
    <property type="taxonomic scope" value="Bacteria"/>
</dbReference>
<dbReference type="HOGENOM" id="CLU_081251_0_1_0"/>
<dbReference type="PhylomeDB" id="Q5SHB1"/>
<dbReference type="EvolutionaryTrace" id="Q5SHB1"/>
<dbReference type="Proteomes" id="UP000000532">
    <property type="component" value="Chromosome"/>
</dbReference>
<dbReference type="GO" id="GO:0004113">
    <property type="term" value="F:2',3'-cyclic-nucleotide 3'-phosphodiesterase activity"/>
    <property type="evidence" value="ECO:0007669"/>
    <property type="project" value="InterPro"/>
</dbReference>
<dbReference type="GO" id="GO:0008664">
    <property type="term" value="F:RNA 2',3'-cyclic 3'-phosphodiesterase activity"/>
    <property type="evidence" value="ECO:0007669"/>
    <property type="project" value="UniProtKB-EC"/>
</dbReference>
<dbReference type="Gene3D" id="3.90.1140.10">
    <property type="entry name" value="Cyclic phosphodiesterase"/>
    <property type="match status" value="1"/>
</dbReference>
<dbReference type="HAMAP" id="MF_01940">
    <property type="entry name" value="RNA_CPDase"/>
    <property type="match status" value="1"/>
</dbReference>
<dbReference type="InterPro" id="IPR009097">
    <property type="entry name" value="Cyclic_Pdiesterase"/>
</dbReference>
<dbReference type="InterPro" id="IPR014051">
    <property type="entry name" value="Phosphoesterase_HXTX"/>
</dbReference>
<dbReference type="InterPro" id="IPR004175">
    <property type="entry name" value="RNA_CPDase"/>
</dbReference>
<dbReference type="NCBIfam" id="TIGR02258">
    <property type="entry name" value="2_5_ligase"/>
    <property type="match status" value="1"/>
</dbReference>
<dbReference type="PANTHER" id="PTHR35561">
    <property type="entry name" value="RNA 2',3'-CYCLIC PHOSPHODIESTERASE"/>
    <property type="match status" value="1"/>
</dbReference>
<dbReference type="PANTHER" id="PTHR35561:SF1">
    <property type="entry name" value="RNA 2',3'-CYCLIC PHOSPHODIESTERASE"/>
    <property type="match status" value="1"/>
</dbReference>
<dbReference type="Pfam" id="PF02834">
    <property type="entry name" value="LigT_PEase"/>
    <property type="match status" value="2"/>
</dbReference>
<dbReference type="SUPFAM" id="SSF55144">
    <property type="entry name" value="LigT-like"/>
    <property type="match status" value="1"/>
</dbReference>
<keyword id="KW-0002">3D-structure</keyword>
<keyword id="KW-0378">Hydrolase</keyword>
<keyword id="KW-1185">Reference proteome</keyword>
<accession>Q5SHB1</accession>
<accession>Q84CU4</accession>
<sequence length="198" mass="22411">MRLFYAVFLPEEVRAALVEAQTKVRPFRGWKPVPPHQLHLTLLFLGERPEEELPDYLALGHRLARLEAPFRARLRGTGYFPNEGTPRVWFAKAEAEGFLRLAEGLRAGVEELLGEEAVRIPGWDKPFKPHITLARRKAPAPRVPPVLFGLEWPVEGFALVRSELKPKGPVYTVLEKFSLRGEHGREQAQGPGERPEGD</sequence>
<reference key="1">
    <citation type="journal article" date="2003" name="J. Mol. Biol.">
        <title>Crystal structure of the 2'-5' RNA ligase from Thermus thermophilus HB8.</title>
        <authorList>
            <person name="Kato M."/>
            <person name="Shirouzu M."/>
            <person name="Terada T."/>
            <person name="Yamaguchi H."/>
            <person name="Murayama K."/>
            <person name="Sakai H."/>
            <person name="Kuramitsu S."/>
            <person name="Yokoyama S."/>
        </authorList>
    </citation>
    <scope>NUCLEOTIDE SEQUENCE [GENOMIC DNA]</scope>
    <scope>X-RAY CRYSTALLOGRAPHY (2.50 ANGSTROMS)</scope>
    <scope>ACTIVE SITES</scope>
    <source>
        <strain>ATCC 27634 / DSM 579 / HB8</strain>
    </source>
</reference>
<reference key="2">
    <citation type="submission" date="2004-11" db="EMBL/GenBank/DDBJ databases">
        <title>Complete genome sequence of Thermus thermophilus HB8.</title>
        <authorList>
            <person name="Masui R."/>
            <person name="Kurokawa K."/>
            <person name="Nakagawa N."/>
            <person name="Tokunaga F."/>
            <person name="Koyama Y."/>
            <person name="Shibata T."/>
            <person name="Oshima T."/>
            <person name="Yokoyama S."/>
            <person name="Yasunaga T."/>
            <person name="Kuramitsu S."/>
        </authorList>
    </citation>
    <scope>NUCLEOTIDE SEQUENCE [LARGE SCALE GENOMIC DNA]</scope>
    <source>
        <strain>ATCC 27634 / DSM 579 / HB8</strain>
    </source>
</reference>